<sequence>MDILCEENTSLSSTTNSLMQLNEDTRLYSNDFNSGEANTSDAFNWTVESENRTNLSCEGCLSPSCLSLLHLQEKNWSALLTAVVIILTIAGNILVIMAVSLEKKLQNATNYFLMSLAIADMLLGFLVMPVSMLTILYGYRWPLPSKLCAVWIYLDVLFSTASIMHLCAISLDRYVAIQNPIHHSRFNSRTKAFLKIIAVWTISVGISMPIPVFGLQDDSKVFKEGSCLLADDNFVLIGSFVSFFIPLTIMVITYFLTIKSLQKEATLCVSDLGTRAKLASFSFLPQSSLSSEKLFQRSIHRDPGSYTGRRTMQSISNEQKACKVLGIVFFLFVVMWCPFFITNIMAVICKESCNEDVIGALLNVFVWIGYLSSAVNPLVYTLFNKTYRSAFSRYIQCQYKENKKPLQLILVNTIPALAYKSSQLQMGQKKNSKQDAKTTDNDCSMVALGKQHSEDASKDNSDGVNEKVSCV</sequence>
<evidence type="ECO:0000250" key="1">
    <source>
        <dbReference type="UniProtKB" id="P14842"/>
    </source>
</evidence>
<evidence type="ECO:0000250" key="2">
    <source>
        <dbReference type="UniProtKB" id="P28223"/>
    </source>
</evidence>
<evidence type="ECO:0000250" key="3">
    <source>
        <dbReference type="UniProtKB" id="P35363"/>
    </source>
</evidence>
<evidence type="ECO:0000250" key="4">
    <source>
        <dbReference type="UniProtKB" id="P41595"/>
    </source>
</evidence>
<evidence type="ECO:0000255" key="5"/>
<evidence type="ECO:0000255" key="6">
    <source>
        <dbReference type="PROSITE-ProRule" id="PRU00521"/>
    </source>
</evidence>
<evidence type="ECO:0000256" key="7">
    <source>
        <dbReference type="SAM" id="MobiDB-lite"/>
    </source>
</evidence>
<name>5HT2A_MACMU</name>
<proteinExistence type="evidence at transcript level"/>
<comment type="function">
    <text evidence="2 3">G-protein coupled receptor for 5-hydroxytryptamine (serotonin). Also functions as a receptor for various drugs and psychoactive substances, including mescaline, psilocybin, 1-(2,5-dimethoxy-4-iodophenyl)-2-aminopropane (DOI) and lysergic acid diethylamide (LSD). Ligand binding causes a conformation change that triggers signaling via guanine nucleotide-binding proteins (G proteins) and modulates the activity of downstream effectors. HTR2A is coupled to G(q)/G(11) G alpha proteins and activates phospholipase C-beta, releasing diacylglycerol (DAG) and inositol 1,4,5-trisphosphate (IP3) second messengers that modulate the activity of phosphatidylinositol 3-kinase and promote the release of Ca(2+) ions from intracellular stores, respectively. Beta-arrestin family members inhibit signaling via G proteins and mediate activation of alternative signaling pathways. Affects neural activity, perception, cognition and mood (By similarity). Plays a role in the regulation of behavior, including responses to anxiogenic situations and psychoactive substances. Plays a role in intestinal smooth muscle contraction, and may play a role in arterial vasoconstriction (By similarity).</text>
</comment>
<comment type="activity regulation">
    <text evidence="2">G-protein coupled receptor activity is regulated by lipids: oleamide increases HTR2A-mediated activity.</text>
</comment>
<comment type="subunit">
    <text evidence="2">Interacts (via C-terminus) with MPDZ and PATJ. May interact (via C-terminus) with MPP3, PRDX6, DLG4, DLG1, CASK, APBA1 and MAGI2. Interacts with GRM2 and DRD2; this may affect signaling.</text>
</comment>
<comment type="subcellular location">
    <subcellularLocation>
        <location evidence="2">Cell membrane</location>
        <topology evidence="2">Multi-pass membrane protein</topology>
    </subcellularLocation>
    <subcellularLocation>
        <location evidence="3">Cell projection</location>
        <location evidence="3">Dendrite</location>
    </subcellularLocation>
    <subcellularLocation>
        <location evidence="1">Cell projection</location>
        <location evidence="1">Axon</location>
    </subcellularLocation>
    <subcellularLocation>
        <location evidence="1">Cytoplasmic vesicle</location>
    </subcellularLocation>
    <subcellularLocation>
        <location evidence="1">Membrane</location>
        <location evidence="1">Caveola</location>
    </subcellularLocation>
    <subcellularLocation>
        <location evidence="1">Presynapse</location>
    </subcellularLocation>
</comment>
<comment type="domain">
    <text evidence="2">The PDZ domain-binding motif is involved in the interaction with PATJ, CASK, APBA1, DLG1 and DLG4.</text>
</comment>
<comment type="similarity">
    <text evidence="6">Belongs to the G-protein coupled receptor 1 family.</text>
</comment>
<dbReference type="EMBL" id="S78209">
    <property type="protein sequence ID" value="AAB34691.1"/>
    <property type="molecule type" value="mRNA"/>
</dbReference>
<dbReference type="RefSeq" id="NP_001028138.1">
    <property type="nucleotide sequence ID" value="NM_001032966.1"/>
</dbReference>
<dbReference type="RefSeq" id="XP_014976363.2">
    <property type="nucleotide sequence ID" value="XM_015120877.2"/>
</dbReference>
<dbReference type="SMR" id="P50128"/>
<dbReference type="FunCoup" id="P50128">
    <property type="interactions" value="773"/>
</dbReference>
<dbReference type="STRING" id="9544.ENSMMUP00000036319"/>
<dbReference type="BindingDB" id="P50128"/>
<dbReference type="ChEMBL" id="CHEMBL3309041"/>
<dbReference type="GlyCosmos" id="P50128">
    <property type="glycosylation" value="5 sites, No reported glycans"/>
</dbReference>
<dbReference type="PaxDb" id="9544-ENSMMUP00000036319"/>
<dbReference type="Ensembl" id="ENSMMUT00000043322.3">
    <property type="protein sequence ID" value="ENSMMUP00000036319.2"/>
    <property type="gene ID" value="ENSMMUG00000004210.4"/>
</dbReference>
<dbReference type="GeneID" id="613032"/>
<dbReference type="KEGG" id="mcc:613032"/>
<dbReference type="CTD" id="3356"/>
<dbReference type="VEuPathDB" id="HostDB:ENSMMUG00000004210"/>
<dbReference type="VGNC" id="VGNC:73539">
    <property type="gene designation" value="HTR2A"/>
</dbReference>
<dbReference type="eggNOG" id="KOG3656">
    <property type="taxonomic scope" value="Eukaryota"/>
</dbReference>
<dbReference type="GeneTree" id="ENSGT01050000244937"/>
<dbReference type="InParanoid" id="P50128"/>
<dbReference type="OMA" id="MVTIGIH"/>
<dbReference type="OrthoDB" id="420518at2759"/>
<dbReference type="Proteomes" id="UP000006718">
    <property type="component" value="Chromosome 17"/>
</dbReference>
<dbReference type="Bgee" id="ENSMMUG00000004210">
    <property type="expression patterns" value="Expressed in primary visual cortex and 8 other cell types or tissues"/>
</dbReference>
<dbReference type="GO" id="GO:0030424">
    <property type="term" value="C:axon"/>
    <property type="evidence" value="ECO:0007669"/>
    <property type="project" value="UniProtKB-SubCell"/>
</dbReference>
<dbReference type="GO" id="GO:0005901">
    <property type="term" value="C:caveola"/>
    <property type="evidence" value="ECO:0007669"/>
    <property type="project" value="UniProtKB-SubCell"/>
</dbReference>
<dbReference type="GO" id="GO:0031410">
    <property type="term" value="C:cytoplasmic vesicle"/>
    <property type="evidence" value="ECO:0007669"/>
    <property type="project" value="UniProtKB-KW"/>
</dbReference>
<dbReference type="GO" id="GO:0030425">
    <property type="term" value="C:dendrite"/>
    <property type="evidence" value="ECO:0000318"/>
    <property type="project" value="GO_Central"/>
</dbReference>
<dbReference type="GO" id="GO:0098666">
    <property type="term" value="C:G protein-coupled serotonin receptor complex"/>
    <property type="evidence" value="ECO:0007669"/>
    <property type="project" value="Ensembl"/>
</dbReference>
<dbReference type="GO" id="GO:0005886">
    <property type="term" value="C:plasma membrane"/>
    <property type="evidence" value="ECO:0000318"/>
    <property type="project" value="GO_Central"/>
</dbReference>
<dbReference type="GO" id="GO:0098793">
    <property type="term" value="C:presynapse"/>
    <property type="evidence" value="ECO:0007669"/>
    <property type="project" value="UniProtKB-SubCell"/>
</dbReference>
<dbReference type="GO" id="GO:0071886">
    <property type="term" value="F:1-(4-iodo-2,5-dimethoxyphenyl)propan-2-amine binding"/>
    <property type="evidence" value="ECO:0007669"/>
    <property type="project" value="Ensembl"/>
</dbReference>
<dbReference type="GO" id="GO:0004993">
    <property type="term" value="F:G protein-coupled serotonin receptor activity"/>
    <property type="evidence" value="ECO:0000318"/>
    <property type="project" value="GO_Central"/>
</dbReference>
<dbReference type="GO" id="GO:0001587">
    <property type="term" value="F:Gq/11-coupled serotonin receptor activity"/>
    <property type="evidence" value="ECO:0007669"/>
    <property type="project" value="Ensembl"/>
</dbReference>
<dbReference type="GO" id="GO:0042802">
    <property type="term" value="F:identical protein binding"/>
    <property type="evidence" value="ECO:0007669"/>
    <property type="project" value="Ensembl"/>
</dbReference>
<dbReference type="GO" id="GO:0030594">
    <property type="term" value="F:neurotransmitter receptor activity"/>
    <property type="evidence" value="ECO:0000318"/>
    <property type="project" value="GO_Central"/>
</dbReference>
<dbReference type="GO" id="GO:0030296">
    <property type="term" value="F:protein tyrosine kinase activator activity"/>
    <property type="evidence" value="ECO:0007669"/>
    <property type="project" value="Ensembl"/>
</dbReference>
<dbReference type="GO" id="GO:0051378">
    <property type="term" value="F:serotonin binding"/>
    <property type="evidence" value="ECO:0007669"/>
    <property type="project" value="Ensembl"/>
</dbReference>
<dbReference type="GO" id="GO:0099589">
    <property type="term" value="F:serotonin receptor activity"/>
    <property type="evidence" value="ECO:0007669"/>
    <property type="project" value="Ensembl"/>
</dbReference>
<dbReference type="GO" id="GO:0007268">
    <property type="term" value="P:chemical synaptic transmission"/>
    <property type="evidence" value="ECO:0000318"/>
    <property type="project" value="GO_Central"/>
</dbReference>
<dbReference type="GO" id="GO:0007187">
    <property type="term" value="P:G protein-coupled receptor signaling pathway, coupled to cyclic nucleotide second messenger"/>
    <property type="evidence" value="ECO:0000318"/>
    <property type="project" value="GO_Central"/>
</dbReference>
<dbReference type="GO" id="GO:0006096">
    <property type="term" value="P:glycolytic process"/>
    <property type="evidence" value="ECO:0007669"/>
    <property type="project" value="Ensembl"/>
</dbReference>
<dbReference type="GO" id="GO:0006874">
    <property type="term" value="P:intracellular calcium ion homeostasis"/>
    <property type="evidence" value="ECO:0007669"/>
    <property type="project" value="Ensembl"/>
</dbReference>
<dbReference type="GO" id="GO:0007208">
    <property type="term" value="P:phospholipase C-activating serotonin receptor signaling pathway"/>
    <property type="evidence" value="ECO:0000318"/>
    <property type="project" value="GO_Central"/>
</dbReference>
<dbReference type="GO" id="GO:0070374">
    <property type="term" value="P:positive regulation of ERK1 and ERK2 cascade"/>
    <property type="evidence" value="ECO:0007669"/>
    <property type="project" value="Ensembl"/>
</dbReference>
<dbReference type="GO" id="GO:0045600">
    <property type="term" value="P:positive regulation of fat cell differentiation"/>
    <property type="evidence" value="ECO:0007669"/>
    <property type="project" value="Ensembl"/>
</dbReference>
<dbReference type="GO" id="GO:0045821">
    <property type="term" value="P:positive regulation of glycolytic process"/>
    <property type="evidence" value="ECO:0007669"/>
    <property type="project" value="Ensembl"/>
</dbReference>
<dbReference type="GO" id="GO:0010513">
    <property type="term" value="P:positive regulation of phosphatidylinositol biosynthetic process"/>
    <property type="evidence" value="ECO:0007669"/>
    <property type="project" value="Ensembl"/>
</dbReference>
<dbReference type="GO" id="GO:0044380">
    <property type="term" value="P:protein localization to cytoskeleton"/>
    <property type="evidence" value="ECO:0007669"/>
    <property type="project" value="Ensembl"/>
</dbReference>
<dbReference type="GO" id="GO:0051209">
    <property type="term" value="P:release of sequestered calcium ion into cytosol"/>
    <property type="evidence" value="ECO:0000318"/>
    <property type="project" value="GO_Central"/>
</dbReference>
<dbReference type="GO" id="GO:0009410">
    <property type="term" value="P:response to xenobiotic stimulus"/>
    <property type="evidence" value="ECO:0000318"/>
    <property type="project" value="GO_Central"/>
</dbReference>
<dbReference type="GO" id="GO:0007210">
    <property type="term" value="P:serotonin receptor signaling pathway"/>
    <property type="evidence" value="ECO:0000318"/>
    <property type="project" value="GO_Central"/>
</dbReference>
<dbReference type="CDD" id="cd15304">
    <property type="entry name" value="7tmA_5-HT2A"/>
    <property type="match status" value="1"/>
</dbReference>
<dbReference type="Gene3D" id="1.20.1070.10">
    <property type="entry name" value="Rhodopsin 7-helix transmembrane proteins"/>
    <property type="match status" value="1"/>
</dbReference>
<dbReference type="InterPro" id="IPR000455">
    <property type="entry name" value="5HT2A_rcpt"/>
</dbReference>
<dbReference type="InterPro" id="IPR002231">
    <property type="entry name" value="5HT_rcpt"/>
</dbReference>
<dbReference type="InterPro" id="IPR000276">
    <property type="entry name" value="GPCR_Rhodpsn"/>
</dbReference>
<dbReference type="InterPro" id="IPR017452">
    <property type="entry name" value="GPCR_Rhodpsn_7TM"/>
</dbReference>
<dbReference type="PANTHER" id="PTHR24247">
    <property type="entry name" value="5-HYDROXYTRYPTAMINE RECEPTOR"/>
    <property type="match status" value="1"/>
</dbReference>
<dbReference type="PANTHER" id="PTHR24247:SF30">
    <property type="entry name" value="5-HYDROXYTRYPTAMINE RECEPTOR 2A"/>
    <property type="match status" value="1"/>
</dbReference>
<dbReference type="Pfam" id="PF00001">
    <property type="entry name" value="7tm_1"/>
    <property type="match status" value="1"/>
</dbReference>
<dbReference type="PRINTS" id="PR00516">
    <property type="entry name" value="5HT2ARECEPTR"/>
</dbReference>
<dbReference type="PRINTS" id="PR01101">
    <property type="entry name" value="5HTRECEPTOR"/>
</dbReference>
<dbReference type="PRINTS" id="PR00237">
    <property type="entry name" value="GPCRRHODOPSN"/>
</dbReference>
<dbReference type="SMART" id="SM01381">
    <property type="entry name" value="7TM_GPCR_Srsx"/>
    <property type="match status" value="1"/>
</dbReference>
<dbReference type="SUPFAM" id="SSF81321">
    <property type="entry name" value="Family A G protein-coupled receptor-like"/>
    <property type="match status" value="1"/>
</dbReference>
<dbReference type="PROSITE" id="PS00237">
    <property type="entry name" value="G_PROTEIN_RECEP_F1_1"/>
    <property type="match status" value="1"/>
</dbReference>
<dbReference type="PROSITE" id="PS50262">
    <property type="entry name" value="G_PROTEIN_RECEP_F1_2"/>
    <property type="match status" value="1"/>
</dbReference>
<protein>
    <recommendedName>
        <fullName>5-hydroxytryptamine receptor 2A</fullName>
        <shortName>5-HT-2</shortName>
        <shortName>5-HT-2A</shortName>
    </recommendedName>
    <alternativeName>
        <fullName>Serotonin receptor 2A</fullName>
    </alternativeName>
</protein>
<keyword id="KW-0085">Behavior</keyword>
<keyword id="KW-1003">Cell membrane</keyword>
<keyword id="KW-0966">Cell projection</keyword>
<keyword id="KW-0968">Cytoplasmic vesicle</keyword>
<keyword id="KW-1015">Disulfide bond</keyword>
<keyword id="KW-0297">G-protein coupled receptor</keyword>
<keyword id="KW-0325">Glycoprotein</keyword>
<keyword id="KW-0472">Membrane</keyword>
<keyword id="KW-0597">Phosphoprotein</keyword>
<keyword id="KW-0675">Receptor</keyword>
<keyword id="KW-1185">Reference proteome</keyword>
<keyword id="KW-0770">Synapse</keyword>
<keyword id="KW-0807">Transducer</keyword>
<keyword id="KW-0812">Transmembrane</keyword>
<keyword id="KW-1133">Transmembrane helix</keyword>
<accession>P50128</accession>
<reference key="1">
    <citation type="journal article" date="1995" name="Biochim. Biophys. Acta">
        <title>Species differences in 5-HT2A receptors: cloned pig and rhesus monkey 5-HT2A receptors reveal conserved transmembrane homology to the human rather than rat sequence.</title>
        <authorList>
            <person name="Johnson M.P."/>
            <person name="Baez M."/>
            <person name="Kursar J.D."/>
            <person name="Nelson D.L."/>
        </authorList>
    </citation>
    <scope>NUCLEOTIDE SEQUENCE [MRNA]</scope>
</reference>
<organism>
    <name type="scientific">Macaca mulatta</name>
    <name type="common">Rhesus macaque</name>
    <dbReference type="NCBI Taxonomy" id="9544"/>
    <lineage>
        <taxon>Eukaryota</taxon>
        <taxon>Metazoa</taxon>
        <taxon>Chordata</taxon>
        <taxon>Craniata</taxon>
        <taxon>Vertebrata</taxon>
        <taxon>Euteleostomi</taxon>
        <taxon>Mammalia</taxon>
        <taxon>Eutheria</taxon>
        <taxon>Euarchontoglires</taxon>
        <taxon>Primates</taxon>
        <taxon>Haplorrhini</taxon>
        <taxon>Catarrhini</taxon>
        <taxon>Cercopithecidae</taxon>
        <taxon>Cercopithecinae</taxon>
        <taxon>Macaca</taxon>
    </lineage>
</organism>
<feature type="chain" id="PRO_0000068947" description="5-hydroxytryptamine receptor 2A">
    <location>
        <begin position="1"/>
        <end position="471"/>
    </location>
</feature>
<feature type="topological domain" description="Extracellular" evidence="2">
    <location>
        <begin position="1"/>
        <end position="80"/>
    </location>
</feature>
<feature type="transmembrane region" description="Helical; Name=1" evidence="2">
    <location>
        <begin position="81"/>
        <end position="97"/>
    </location>
</feature>
<feature type="topological domain" description="Cytoplasmic" evidence="2">
    <location>
        <begin position="98"/>
        <end position="111"/>
    </location>
</feature>
<feature type="transmembrane region" description="Helical; Name=2" evidence="2">
    <location>
        <begin position="112"/>
        <end position="137"/>
    </location>
</feature>
<feature type="topological domain" description="Extracellular" evidence="2">
    <location>
        <begin position="138"/>
        <end position="146"/>
    </location>
</feature>
<feature type="transmembrane region" description="Helical; Name=3" evidence="2">
    <location>
        <begin position="147"/>
        <end position="171"/>
    </location>
</feature>
<feature type="topological domain" description="Cytoplasmic" evidence="2">
    <location>
        <begin position="172"/>
        <end position="191"/>
    </location>
</feature>
<feature type="transmembrane region" description="Helical; Name=4" evidence="2">
    <location>
        <begin position="192"/>
        <end position="215"/>
    </location>
</feature>
<feature type="topological domain" description="Extracellular" evidence="2">
    <location>
        <begin position="216"/>
        <end position="232"/>
    </location>
</feature>
<feature type="transmembrane region" description="Helical; Name=5" evidence="2">
    <location>
        <begin position="233"/>
        <end position="258"/>
    </location>
</feature>
<feature type="topological domain" description="Cytoplasmic" evidence="2">
    <location>
        <begin position="259"/>
        <end position="322"/>
    </location>
</feature>
<feature type="transmembrane region" description="Helical; Name=6" evidence="2">
    <location>
        <begin position="323"/>
        <end position="348"/>
    </location>
</feature>
<feature type="topological domain" description="Extracellular" evidence="2">
    <location>
        <begin position="349"/>
        <end position="356"/>
    </location>
</feature>
<feature type="transmembrane region" description="Helical; Name=7" evidence="2">
    <location>
        <begin position="357"/>
        <end position="382"/>
    </location>
</feature>
<feature type="topological domain" description="Cytoplasmic" evidence="2">
    <location>
        <begin position="383"/>
        <end position="471"/>
    </location>
</feature>
<feature type="region of interest" description="Disordered" evidence="7">
    <location>
        <begin position="450"/>
        <end position="471"/>
    </location>
</feature>
<feature type="short sequence motif" description="DRY motif; important for ligand-induced conformation changes" evidence="4">
    <location>
        <begin position="172"/>
        <end position="174"/>
    </location>
</feature>
<feature type="short sequence motif" description="NPxxY motif; important for ligand-induced conformation changes and signaling" evidence="4">
    <location>
        <begin position="376"/>
        <end position="380"/>
    </location>
</feature>
<feature type="short sequence motif" description="PDZ-binding" evidence="2">
    <location>
        <begin position="469"/>
        <end position="471"/>
    </location>
</feature>
<feature type="compositionally biased region" description="Basic and acidic residues" evidence="7">
    <location>
        <begin position="451"/>
        <end position="465"/>
    </location>
</feature>
<feature type="binding site" evidence="2">
    <location>
        <position position="155"/>
    </location>
    <ligand>
        <name>serotonin</name>
        <dbReference type="ChEBI" id="CHEBI:350546"/>
    </ligand>
</feature>
<feature type="binding site" evidence="2">
    <location>
        <position position="343"/>
    </location>
    <ligand>
        <name>serotonin</name>
        <dbReference type="ChEBI" id="CHEBI:350546"/>
    </ligand>
</feature>
<feature type="site" description="Hydrophobic barrier that decreases the speed of ligand binding and dissociation" evidence="2">
    <location>
        <position position="229"/>
    </location>
</feature>
<feature type="modified residue" description="Phosphoserine" evidence="2">
    <location>
        <position position="280"/>
    </location>
</feature>
<feature type="glycosylation site" description="N-linked (GlcNAc...) asparagine" evidence="5">
    <location>
        <position position="8"/>
    </location>
</feature>
<feature type="glycosylation site" description="N-linked (GlcNAc...) asparagine" evidence="5">
    <location>
        <position position="38"/>
    </location>
</feature>
<feature type="glycosylation site" description="N-linked (GlcNAc...) asparagine" evidence="5">
    <location>
        <position position="44"/>
    </location>
</feature>
<feature type="glycosylation site" description="N-linked (GlcNAc...) asparagine" evidence="5">
    <location>
        <position position="51"/>
    </location>
</feature>
<feature type="glycosylation site" description="N-linked (GlcNAc...) asparagine" evidence="5">
    <location>
        <position position="54"/>
    </location>
</feature>
<feature type="disulfide bond" evidence="6">
    <location>
        <begin position="148"/>
        <end position="227"/>
    </location>
</feature>
<feature type="disulfide bond" evidence="6">
    <location>
        <begin position="349"/>
        <end position="353"/>
    </location>
</feature>
<gene>
    <name type="primary">HTR2A</name>
</gene>